<feature type="chain" id="PRO_1000122347" description="Large ribosomal subunit protein bL20">
    <location>
        <begin position="1"/>
        <end position="119"/>
    </location>
</feature>
<gene>
    <name evidence="1" type="primary">rplT</name>
    <name type="ordered locus">OCAR_4440</name>
    <name type="ordered locus">OCA5_c00910</name>
</gene>
<organism>
    <name type="scientific">Afipia carboxidovorans (strain ATCC 49405 / DSM 1227 / KCTC 32145 / OM5)</name>
    <name type="common">Oligotropha carboxidovorans</name>
    <dbReference type="NCBI Taxonomy" id="504832"/>
    <lineage>
        <taxon>Bacteria</taxon>
        <taxon>Pseudomonadati</taxon>
        <taxon>Pseudomonadota</taxon>
        <taxon>Alphaproteobacteria</taxon>
        <taxon>Hyphomicrobiales</taxon>
        <taxon>Nitrobacteraceae</taxon>
        <taxon>Afipia</taxon>
    </lineage>
</organism>
<sequence length="119" mass="13202">MARVKRGVTAHAKHKKVYKAAEGFRGRRKNTIRAAKAAVDKAQQYAYVGRKLKKRNFRALWIQRINAAVRPFGLTYSRFINGLAKSGVVIDRKVLSDLAIHEPAAFQAIAEKAKAALAA</sequence>
<accession>B6JCK6</accession>
<accession>F8C0C4</accession>
<comment type="function">
    <text evidence="1">Binds directly to 23S ribosomal RNA and is necessary for the in vitro assembly process of the 50S ribosomal subunit. It is not involved in the protein synthesizing functions of that subunit.</text>
</comment>
<comment type="similarity">
    <text evidence="1">Belongs to the bacterial ribosomal protein bL20 family.</text>
</comment>
<keyword id="KW-1185">Reference proteome</keyword>
<keyword id="KW-0687">Ribonucleoprotein</keyword>
<keyword id="KW-0689">Ribosomal protein</keyword>
<keyword id="KW-0694">RNA-binding</keyword>
<keyword id="KW-0699">rRNA-binding</keyword>
<evidence type="ECO:0000255" key="1">
    <source>
        <dbReference type="HAMAP-Rule" id="MF_00382"/>
    </source>
</evidence>
<evidence type="ECO:0000305" key="2"/>
<name>RL20_AFIC5</name>
<proteinExistence type="inferred from homology"/>
<protein>
    <recommendedName>
        <fullName evidence="1">Large ribosomal subunit protein bL20</fullName>
    </recommendedName>
    <alternativeName>
        <fullName evidence="2">50S ribosomal protein L20</fullName>
    </alternativeName>
</protein>
<reference key="1">
    <citation type="journal article" date="2008" name="J. Bacteriol.">
        <title>Genome sequence of the chemolithoautotrophic bacterium Oligotropha carboxidovorans OM5T.</title>
        <authorList>
            <person name="Paul D."/>
            <person name="Bridges S."/>
            <person name="Burgess S.C."/>
            <person name="Dandass Y."/>
            <person name="Lawrence M.L."/>
        </authorList>
    </citation>
    <scope>NUCLEOTIDE SEQUENCE [LARGE SCALE GENOMIC DNA]</scope>
    <source>
        <strain>ATCC 49405 / DSM 1227 / KCTC 32145 / OM5</strain>
    </source>
</reference>
<reference key="2">
    <citation type="journal article" date="2011" name="J. Bacteriol.">
        <title>Complete genome sequences of the chemolithoautotrophic Oligotropha carboxidovorans strains OM4 and OM5.</title>
        <authorList>
            <person name="Volland S."/>
            <person name="Rachinger M."/>
            <person name="Strittmatter A."/>
            <person name="Daniel R."/>
            <person name="Gottschalk G."/>
            <person name="Meyer O."/>
        </authorList>
    </citation>
    <scope>NUCLEOTIDE SEQUENCE [LARGE SCALE GENOMIC DNA]</scope>
    <source>
        <strain>ATCC 49405 / DSM 1227 / KCTC 32145 / OM5</strain>
    </source>
</reference>
<dbReference type="EMBL" id="CP001196">
    <property type="protein sequence ID" value="ACI91586.1"/>
    <property type="molecule type" value="Genomic_DNA"/>
</dbReference>
<dbReference type="EMBL" id="CP002826">
    <property type="protein sequence ID" value="AEI04823.1"/>
    <property type="molecule type" value="Genomic_DNA"/>
</dbReference>
<dbReference type="RefSeq" id="WP_012561617.1">
    <property type="nucleotide sequence ID" value="NC_015684.1"/>
</dbReference>
<dbReference type="SMR" id="B6JCK6"/>
<dbReference type="STRING" id="504832.OCA5_c00910"/>
<dbReference type="KEGG" id="oca:OCAR_4440"/>
<dbReference type="KEGG" id="ocg:OCA5_c00910"/>
<dbReference type="PATRIC" id="fig|504832.7.peg.97"/>
<dbReference type="eggNOG" id="COG0292">
    <property type="taxonomic scope" value="Bacteria"/>
</dbReference>
<dbReference type="HOGENOM" id="CLU_123265_0_1_5"/>
<dbReference type="OrthoDB" id="9808966at2"/>
<dbReference type="Proteomes" id="UP000007730">
    <property type="component" value="Chromosome"/>
</dbReference>
<dbReference type="GO" id="GO:1990904">
    <property type="term" value="C:ribonucleoprotein complex"/>
    <property type="evidence" value="ECO:0007669"/>
    <property type="project" value="UniProtKB-KW"/>
</dbReference>
<dbReference type="GO" id="GO:0005840">
    <property type="term" value="C:ribosome"/>
    <property type="evidence" value="ECO:0007669"/>
    <property type="project" value="UniProtKB-KW"/>
</dbReference>
<dbReference type="GO" id="GO:0019843">
    <property type="term" value="F:rRNA binding"/>
    <property type="evidence" value="ECO:0007669"/>
    <property type="project" value="UniProtKB-UniRule"/>
</dbReference>
<dbReference type="GO" id="GO:0003735">
    <property type="term" value="F:structural constituent of ribosome"/>
    <property type="evidence" value="ECO:0007669"/>
    <property type="project" value="InterPro"/>
</dbReference>
<dbReference type="GO" id="GO:0000027">
    <property type="term" value="P:ribosomal large subunit assembly"/>
    <property type="evidence" value="ECO:0007669"/>
    <property type="project" value="UniProtKB-UniRule"/>
</dbReference>
<dbReference type="GO" id="GO:0006412">
    <property type="term" value="P:translation"/>
    <property type="evidence" value="ECO:0007669"/>
    <property type="project" value="InterPro"/>
</dbReference>
<dbReference type="CDD" id="cd07026">
    <property type="entry name" value="Ribosomal_L20"/>
    <property type="match status" value="1"/>
</dbReference>
<dbReference type="FunFam" id="1.10.1900.20:FF:000001">
    <property type="entry name" value="50S ribosomal protein L20"/>
    <property type="match status" value="1"/>
</dbReference>
<dbReference type="Gene3D" id="6.10.160.10">
    <property type="match status" value="1"/>
</dbReference>
<dbReference type="Gene3D" id="1.10.1900.20">
    <property type="entry name" value="Ribosomal protein L20"/>
    <property type="match status" value="1"/>
</dbReference>
<dbReference type="HAMAP" id="MF_00382">
    <property type="entry name" value="Ribosomal_bL20"/>
    <property type="match status" value="1"/>
</dbReference>
<dbReference type="InterPro" id="IPR005813">
    <property type="entry name" value="Ribosomal_bL20"/>
</dbReference>
<dbReference type="InterPro" id="IPR049946">
    <property type="entry name" value="RIBOSOMAL_L20_CS"/>
</dbReference>
<dbReference type="InterPro" id="IPR035566">
    <property type="entry name" value="Ribosomal_protein_bL20_C"/>
</dbReference>
<dbReference type="NCBIfam" id="TIGR01032">
    <property type="entry name" value="rplT_bact"/>
    <property type="match status" value="1"/>
</dbReference>
<dbReference type="PANTHER" id="PTHR10986">
    <property type="entry name" value="39S RIBOSOMAL PROTEIN L20"/>
    <property type="match status" value="1"/>
</dbReference>
<dbReference type="Pfam" id="PF00453">
    <property type="entry name" value="Ribosomal_L20"/>
    <property type="match status" value="1"/>
</dbReference>
<dbReference type="PRINTS" id="PR00062">
    <property type="entry name" value="RIBOSOMALL20"/>
</dbReference>
<dbReference type="SUPFAM" id="SSF74731">
    <property type="entry name" value="Ribosomal protein L20"/>
    <property type="match status" value="1"/>
</dbReference>
<dbReference type="PROSITE" id="PS00937">
    <property type="entry name" value="RIBOSOMAL_L20"/>
    <property type="match status" value="1"/>
</dbReference>